<reference key="1">
    <citation type="journal article" date="2002" name="Science">
        <title>50 million years of genomic stasis in endosymbiotic bacteria.</title>
        <authorList>
            <person name="Tamas I."/>
            <person name="Klasson L."/>
            <person name="Canbaeck B."/>
            <person name="Naeslund A.K."/>
            <person name="Eriksson A.-S."/>
            <person name="Wernegreen J.J."/>
            <person name="Sandstroem J.P."/>
            <person name="Moran N.A."/>
            <person name="Andersson S.G.E."/>
        </authorList>
    </citation>
    <scope>NUCLEOTIDE SEQUENCE [LARGE SCALE GENOMIC DNA]</scope>
    <source>
        <strain>Sg</strain>
    </source>
</reference>
<gene>
    <name evidence="1" type="primary">fusA</name>
    <name type="ordered locus">BUsg_508</name>
</gene>
<organism>
    <name type="scientific">Buchnera aphidicola subsp. Schizaphis graminum (strain Sg)</name>
    <dbReference type="NCBI Taxonomy" id="198804"/>
    <lineage>
        <taxon>Bacteria</taxon>
        <taxon>Pseudomonadati</taxon>
        <taxon>Pseudomonadota</taxon>
        <taxon>Gammaproteobacteria</taxon>
        <taxon>Enterobacterales</taxon>
        <taxon>Erwiniaceae</taxon>
        <taxon>Buchnera</taxon>
    </lineage>
</organism>
<proteinExistence type="inferred from homology"/>
<sequence length="702" mass="78321">MSRTTPICQYRNIGISAHIDAGKTTTTERILFYTGINHKIGEVHDGAATMDWMEQEQERGITITSAATTAFWSGMAKQFKPHRINIIDTPGHVDFTIEVERSMRVLDGAVMVYCAVGGVQPQSETVWRQANKYNVPRIAFINKMDRMGANFLRSVKQIKTRLGGNPVPLQLPIGSEENFKGVIDLIKMKAIKWKDIDQGITFTYDEIPSDMIELSEKWHQNLIESAVESNEELMEKYLSGFVLSEKEIKSELRKRSLNNEITLITCGSAFKNKGVQALLDAIIEYLPAPNDIQDIKGITNDKASTVAFRSSNDKAPFSALAFKIASDPFVGNLTFFRVYSGIVKSGDSVLNSVKSQRERFGRIVQMHANKREEIKEVYAGDIAAAIGLKDVTTGDTLCDLNQPIILERMEFPEPVISISVEPKTKADQEKMGLALARLAKEDPSFRVRTDQESNQTIISGMGELHLEIIVDRMKREFSVDANVGKPQVAYRETILNKVTDIEGKHIKQSGGRGQYGHVVIELFPLESGGKGYLFVNDIKGGVIPNEYISAIDKGIQEQLKYGPLAGYPVVDIGVRLYFGSYHDVDSSELAFKLAASLAFKNGFKKAKPILLEPIMKVEVETPDDYMGDVIGDLNRRRGIIEGMKDLEIGKIINACVPLSEMFGYATDLRSQTQGRASYSMEFLKYVEAPSVISDLIIQKRER</sequence>
<comment type="function">
    <text evidence="1">Catalyzes the GTP-dependent ribosomal translocation step during translation elongation. During this step, the ribosome changes from the pre-translocational (PRE) to the post-translocational (POST) state as the newly formed A-site-bound peptidyl-tRNA and P-site-bound deacylated tRNA move to the P and E sites, respectively. Catalyzes the coordinated movement of the two tRNA molecules, the mRNA and conformational changes in the ribosome.</text>
</comment>
<comment type="subcellular location">
    <subcellularLocation>
        <location evidence="1">Cytoplasm</location>
    </subcellularLocation>
</comment>
<comment type="similarity">
    <text evidence="1">Belongs to the TRAFAC class translation factor GTPase superfamily. Classic translation factor GTPase family. EF-G/EF-2 subfamily.</text>
</comment>
<evidence type="ECO:0000255" key="1">
    <source>
        <dbReference type="HAMAP-Rule" id="MF_00054"/>
    </source>
</evidence>
<keyword id="KW-0963">Cytoplasm</keyword>
<keyword id="KW-0251">Elongation factor</keyword>
<keyword id="KW-0342">GTP-binding</keyword>
<keyword id="KW-0547">Nucleotide-binding</keyword>
<keyword id="KW-0648">Protein biosynthesis</keyword>
<name>EFG_BUCAP</name>
<dbReference type="EMBL" id="AE013218">
    <property type="protein sequence ID" value="AAM68051.1"/>
    <property type="molecule type" value="Genomic_DNA"/>
</dbReference>
<dbReference type="RefSeq" id="WP_011054017.1">
    <property type="nucleotide sequence ID" value="NC_004061.1"/>
</dbReference>
<dbReference type="SMR" id="Q8K948"/>
<dbReference type="STRING" id="198804.BUsg_508"/>
<dbReference type="GeneID" id="93003983"/>
<dbReference type="KEGG" id="bas:BUsg_508"/>
<dbReference type="eggNOG" id="COG0480">
    <property type="taxonomic scope" value="Bacteria"/>
</dbReference>
<dbReference type="HOGENOM" id="CLU_002794_4_1_6"/>
<dbReference type="Proteomes" id="UP000000416">
    <property type="component" value="Chromosome"/>
</dbReference>
<dbReference type="GO" id="GO:0005737">
    <property type="term" value="C:cytoplasm"/>
    <property type="evidence" value="ECO:0007669"/>
    <property type="project" value="UniProtKB-SubCell"/>
</dbReference>
<dbReference type="GO" id="GO:0005525">
    <property type="term" value="F:GTP binding"/>
    <property type="evidence" value="ECO:0007669"/>
    <property type="project" value="UniProtKB-UniRule"/>
</dbReference>
<dbReference type="GO" id="GO:0003924">
    <property type="term" value="F:GTPase activity"/>
    <property type="evidence" value="ECO:0007669"/>
    <property type="project" value="InterPro"/>
</dbReference>
<dbReference type="GO" id="GO:0097216">
    <property type="term" value="F:guanosine tetraphosphate binding"/>
    <property type="evidence" value="ECO:0007669"/>
    <property type="project" value="UniProtKB-ARBA"/>
</dbReference>
<dbReference type="GO" id="GO:0003746">
    <property type="term" value="F:translation elongation factor activity"/>
    <property type="evidence" value="ECO:0007669"/>
    <property type="project" value="UniProtKB-UniRule"/>
</dbReference>
<dbReference type="GO" id="GO:0032790">
    <property type="term" value="P:ribosome disassembly"/>
    <property type="evidence" value="ECO:0007669"/>
    <property type="project" value="TreeGrafter"/>
</dbReference>
<dbReference type="CDD" id="cd01886">
    <property type="entry name" value="EF-G"/>
    <property type="match status" value="1"/>
</dbReference>
<dbReference type="CDD" id="cd16262">
    <property type="entry name" value="EFG_III"/>
    <property type="match status" value="1"/>
</dbReference>
<dbReference type="CDD" id="cd01434">
    <property type="entry name" value="EFG_mtEFG1_IV"/>
    <property type="match status" value="1"/>
</dbReference>
<dbReference type="CDD" id="cd03713">
    <property type="entry name" value="EFG_mtEFG_C"/>
    <property type="match status" value="1"/>
</dbReference>
<dbReference type="CDD" id="cd04088">
    <property type="entry name" value="EFG_mtEFG_II"/>
    <property type="match status" value="1"/>
</dbReference>
<dbReference type="FunFam" id="2.40.30.10:FF:000006">
    <property type="entry name" value="Elongation factor G"/>
    <property type="match status" value="1"/>
</dbReference>
<dbReference type="FunFam" id="3.30.230.10:FF:000003">
    <property type="entry name" value="Elongation factor G"/>
    <property type="match status" value="1"/>
</dbReference>
<dbReference type="FunFam" id="3.30.70.240:FF:000001">
    <property type="entry name" value="Elongation factor G"/>
    <property type="match status" value="1"/>
</dbReference>
<dbReference type="FunFam" id="3.30.70.870:FF:000001">
    <property type="entry name" value="Elongation factor G"/>
    <property type="match status" value="1"/>
</dbReference>
<dbReference type="FunFam" id="3.40.50.300:FF:000029">
    <property type="entry name" value="Elongation factor G"/>
    <property type="match status" value="1"/>
</dbReference>
<dbReference type="Gene3D" id="3.30.230.10">
    <property type="match status" value="1"/>
</dbReference>
<dbReference type="Gene3D" id="3.30.70.240">
    <property type="match status" value="1"/>
</dbReference>
<dbReference type="Gene3D" id="3.30.70.870">
    <property type="entry name" value="Elongation Factor G (Translational Gtpase), domain 3"/>
    <property type="match status" value="1"/>
</dbReference>
<dbReference type="Gene3D" id="3.40.50.300">
    <property type="entry name" value="P-loop containing nucleotide triphosphate hydrolases"/>
    <property type="match status" value="1"/>
</dbReference>
<dbReference type="Gene3D" id="2.40.30.10">
    <property type="entry name" value="Translation factors"/>
    <property type="match status" value="1"/>
</dbReference>
<dbReference type="HAMAP" id="MF_00054_B">
    <property type="entry name" value="EF_G_EF_2_B"/>
    <property type="match status" value="1"/>
</dbReference>
<dbReference type="InterPro" id="IPR041095">
    <property type="entry name" value="EFG_II"/>
</dbReference>
<dbReference type="InterPro" id="IPR009022">
    <property type="entry name" value="EFG_III"/>
</dbReference>
<dbReference type="InterPro" id="IPR035647">
    <property type="entry name" value="EFG_III/V"/>
</dbReference>
<dbReference type="InterPro" id="IPR047872">
    <property type="entry name" value="EFG_IV"/>
</dbReference>
<dbReference type="InterPro" id="IPR035649">
    <property type="entry name" value="EFG_V"/>
</dbReference>
<dbReference type="InterPro" id="IPR000640">
    <property type="entry name" value="EFG_V-like"/>
</dbReference>
<dbReference type="InterPro" id="IPR004161">
    <property type="entry name" value="EFTu-like_2"/>
</dbReference>
<dbReference type="InterPro" id="IPR031157">
    <property type="entry name" value="G_TR_CS"/>
</dbReference>
<dbReference type="InterPro" id="IPR027417">
    <property type="entry name" value="P-loop_NTPase"/>
</dbReference>
<dbReference type="InterPro" id="IPR020568">
    <property type="entry name" value="Ribosomal_Su5_D2-typ_SF"/>
</dbReference>
<dbReference type="InterPro" id="IPR014721">
    <property type="entry name" value="Ribsml_uS5_D2-typ_fold_subgr"/>
</dbReference>
<dbReference type="InterPro" id="IPR005225">
    <property type="entry name" value="Small_GTP-bd"/>
</dbReference>
<dbReference type="InterPro" id="IPR000795">
    <property type="entry name" value="T_Tr_GTP-bd_dom"/>
</dbReference>
<dbReference type="InterPro" id="IPR009000">
    <property type="entry name" value="Transl_B-barrel_sf"/>
</dbReference>
<dbReference type="InterPro" id="IPR004540">
    <property type="entry name" value="Transl_elong_EFG/EF2"/>
</dbReference>
<dbReference type="InterPro" id="IPR005517">
    <property type="entry name" value="Transl_elong_EFG/EF2_IV"/>
</dbReference>
<dbReference type="NCBIfam" id="TIGR00484">
    <property type="entry name" value="EF-G"/>
    <property type="match status" value="1"/>
</dbReference>
<dbReference type="NCBIfam" id="NF009381">
    <property type="entry name" value="PRK12740.1-5"/>
    <property type="match status" value="1"/>
</dbReference>
<dbReference type="NCBIfam" id="TIGR00231">
    <property type="entry name" value="small_GTP"/>
    <property type="match status" value="1"/>
</dbReference>
<dbReference type="PANTHER" id="PTHR43261:SF1">
    <property type="entry name" value="RIBOSOME-RELEASING FACTOR 2, MITOCHONDRIAL"/>
    <property type="match status" value="1"/>
</dbReference>
<dbReference type="PANTHER" id="PTHR43261">
    <property type="entry name" value="TRANSLATION ELONGATION FACTOR G-RELATED"/>
    <property type="match status" value="1"/>
</dbReference>
<dbReference type="Pfam" id="PF00679">
    <property type="entry name" value="EFG_C"/>
    <property type="match status" value="1"/>
</dbReference>
<dbReference type="Pfam" id="PF14492">
    <property type="entry name" value="EFG_III"/>
    <property type="match status" value="1"/>
</dbReference>
<dbReference type="Pfam" id="PF03764">
    <property type="entry name" value="EFG_IV"/>
    <property type="match status" value="1"/>
</dbReference>
<dbReference type="Pfam" id="PF00009">
    <property type="entry name" value="GTP_EFTU"/>
    <property type="match status" value="1"/>
</dbReference>
<dbReference type="Pfam" id="PF03144">
    <property type="entry name" value="GTP_EFTU_D2"/>
    <property type="match status" value="1"/>
</dbReference>
<dbReference type="PRINTS" id="PR00315">
    <property type="entry name" value="ELONGATNFCT"/>
</dbReference>
<dbReference type="SMART" id="SM00838">
    <property type="entry name" value="EFG_C"/>
    <property type="match status" value="1"/>
</dbReference>
<dbReference type="SMART" id="SM00889">
    <property type="entry name" value="EFG_IV"/>
    <property type="match status" value="1"/>
</dbReference>
<dbReference type="SUPFAM" id="SSF54980">
    <property type="entry name" value="EF-G C-terminal domain-like"/>
    <property type="match status" value="2"/>
</dbReference>
<dbReference type="SUPFAM" id="SSF52540">
    <property type="entry name" value="P-loop containing nucleoside triphosphate hydrolases"/>
    <property type="match status" value="1"/>
</dbReference>
<dbReference type="SUPFAM" id="SSF54211">
    <property type="entry name" value="Ribosomal protein S5 domain 2-like"/>
    <property type="match status" value="1"/>
</dbReference>
<dbReference type="SUPFAM" id="SSF50447">
    <property type="entry name" value="Translation proteins"/>
    <property type="match status" value="1"/>
</dbReference>
<dbReference type="PROSITE" id="PS00301">
    <property type="entry name" value="G_TR_1"/>
    <property type="match status" value="1"/>
</dbReference>
<dbReference type="PROSITE" id="PS51722">
    <property type="entry name" value="G_TR_2"/>
    <property type="match status" value="1"/>
</dbReference>
<accession>Q8K948</accession>
<protein>
    <recommendedName>
        <fullName evidence="1">Elongation factor G</fullName>
        <shortName evidence="1">EF-G</shortName>
    </recommendedName>
</protein>
<feature type="chain" id="PRO_0000091091" description="Elongation factor G">
    <location>
        <begin position="1"/>
        <end position="702"/>
    </location>
</feature>
<feature type="domain" description="tr-type G">
    <location>
        <begin position="8"/>
        <end position="290"/>
    </location>
</feature>
<feature type="binding site" evidence="1">
    <location>
        <begin position="17"/>
        <end position="24"/>
    </location>
    <ligand>
        <name>GTP</name>
        <dbReference type="ChEBI" id="CHEBI:37565"/>
    </ligand>
</feature>
<feature type="binding site" evidence="1">
    <location>
        <begin position="88"/>
        <end position="92"/>
    </location>
    <ligand>
        <name>GTP</name>
        <dbReference type="ChEBI" id="CHEBI:37565"/>
    </ligand>
</feature>
<feature type="binding site" evidence="1">
    <location>
        <begin position="142"/>
        <end position="145"/>
    </location>
    <ligand>
        <name>GTP</name>
        <dbReference type="ChEBI" id="CHEBI:37565"/>
    </ligand>
</feature>